<proteinExistence type="inferred from homology"/>
<evidence type="ECO:0000255" key="1">
    <source>
        <dbReference type="HAMAP-Rule" id="MF_01371"/>
    </source>
</evidence>
<evidence type="ECO:0000305" key="2"/>
<comment type="subunit">
    <text evidence="1">Part of the 50S ribosomal subunit.</text>
</comment>
<comment type="similarity">
    <text evidence="1">Belongs to the universal ribosomal protein uL30 family.</text>
</comment>
<organism>
    <name type="scientific">Desulfatibacillum aliphaticivorans</name>
    <dbReference type="NCBI Taxonomy" id="218208"/>
    <lineage>
        <taxon>Bacteria</taxon>
        <taxon>Pseudomonadati</taxon>
        <taxon>Thermodesulfobacteriota</taxon>
        <taxon>Desulfobacteria</taxon>
        <taxon>Desulfobacterales</taxon>
        <taxon>Desulfatibacillaceae</taxon>
        <taxon>Desulfatibacillum</taxon>
    </lineage>
</organism>
<name>RL30_DESAL</name>
<dbReference type="EMBL" id="CP001322">
    <property type="protein sequence ID" value="ACL03594.1"/>
    <property type="molecule type" value="Genomic_DNA"/>
</dbReference>
<dbReference type="RefSeq" id="WP_012611025.1">
    <property type="nucleotide sequence ID" value="NC_011768.1"/>
</dbReference>
<dbReference type="SMR" id="B8FER7"/>
<dbReference type="KEGG" id="dal:Dalk_1897"/>
<dbReference type="eggNOG" id="COG1841">
    <property type="taxonomic scope" value="Bacteria"/>
</dbReference>
<dbReference type="HOGENOM" id="CLU_131047_2_1_7"/>
<dbReference type="Proteomes" id="UP000000739">
    <property type="component" value="Chromosome"/>
</dbReference>
<dbReference type="GO" id="GO:0022625">
    <property type="term" value="C:cytosolic large ribosomal subunit"/>
    <property type="evidence" value="ECO:0007669"/>
    <property type="project" value="TreeGrafter"/>
</dbReference>
<dbReference type="GO" id="GO:0003735">
    <property type="term" value="F:structural constituent of ribosome"/>
    <property type="evidence" value="ECO:0007669"/>
    <property type="project" value="InterPro"/>
</dbReference>
<dbReference type="GO" id="GO:0006412">
    <property type="term" value="P:translation"/>
    <property type="evidence" value="ECO:0007669"/>
    <property type="project" value="InterPro"/>
</dbReference>
<dbReference type="CDD" id="cd01658">
    <property type="entry name" value="Ribosomal_L30"/>
    <property type="match status" value="1"/>
</dbReference>
<dbReference type="FunFam" id="3.30.1390.20:FF:000001">
    <property type="entry name" value="50S ribosomal protein L30"/>
    <property type="match status" value="1"/>
</dbReference>
<dbReference type="Gene3D" id="3.30.1390.20">
    <property type="entry name" value="Ribosomal protein L30, ferredoxin-like fold domain"/>
    <property type="match status" value="1"/>
</dbReference>
<dbReference type="HAMAP" id="MF_01371_B">
    <property type="entry name" value="Ribosomal_uL30_B"/>
    <property type="match status" value="1"/>
</dbReference>
<dbReference type="InterPro" id="IPR036919">
    <property type="entry name" value="Ribo_uL30_ferredoxin-like_sf"/>
</dbReference>
<dbReference type="InterPro" id="IPR005996">
    <property type="entry name" value="Ribosomal_uL30_bac-type"/>
</dbReference>
<dbReference type="InterPro" id="IPR016082">
    <property type="entry name" value="Ribosomal_uL30_ferredoxin-like"/>
</dbReference>
<dbReference type="NCBIfam" id="TIGR01308">
    <property type="entry name" value="rpmD_bact"/>
    <property type="match status" value="1"/>
</dbReference>
<dbReference type="PANTHER" id="PTHR15892:SF2">
    <property type="entry name" value="LARGE RIBOSOMAL SUBUNIT PROTEIN UL30M"/>
    <property type="match status" value="1"/>
</dbReference>
<dbReference type="PANTHER" id="PTHR15892">
    <property type="entry name" value="MITOCHONDRIAL RIBOSOMAL PROTEIN L30"/>
    <property type="match status" value="1"/>
</dbReference>
<dbReference type="Pfam" id="PF00327">
    <property type="entry name" value="Ribosomal_L30"/>
    <property type="match status" value="1"/>
</dbReference>
<dbReference type="PIRSF" id="PIRSF002211">
    <property type="entry name" value="Ribosomal_L30_bac-type"/>
    <property type="match status" value="1"/>
</dbReference>
<dbReference type="SUPFAM" id="SSF55129">
    <property type="entry name" value="Ribosomal protein L30p/L7e"/>
    <property type="match status" value="1"/>
</dbReference>
<feature type="chain" id="PRO_1000144673" description="Large ribosomal subunit protein uL30">
    <location>
        <begin position="1"/>
        <end position="59"/>
    </location>
</feature>
<gene>
    <name evidence="1" type="primary">rpmD</name>
    <name type="ordered locus">Dalk_1897</name>
</gene>
<accession>B8FER7</accession>
<reference key="1">
    <citation type="journal article" date="2012" name="Environ. Microbiol.">
        <title>The genome sequence of Desulfatibacillum alkenivorans AK-01: a blueprint for anaerobic alkane oxidation.</title>
        <authorList>
            <person name="Callaghan A.V."/>
            <person name="Morris B.E."/>
            <person name="Pereira I.A."/>
            <person name="McInerney M.J."/>
            <person name="Austin R.N."/>
            <person name="Groves J.T."/>
            <person name="Kukor J.J."/>
            <person name="Suflita J.M."/>
            <person name="Young L.Y."/>
            <person name="Zylstra G.J."/>
            <person name="Wawrik B."/>
        </authorList>
    </citation>
    <scope>NUCLEOTIDE SEQUENCE [LARGE SCALE GENOMIC DNA]</scope>
    <source>
        <strain>AK-01</strain>
    </source>
</reference>
<sequence length="59" mass="6765">MKQKIKVTLVKSMIARPEKHRKVLRGMGLTKLNKTVELEDTPCIRGMIHKVSHLVSVKE</sequence>
<keyword id="KW-1185">Reference proteome</keyword>
<keyword id="KW-0687">Ribonucleoprotein</keyword>
<keyword id="KW-0689">Ribosomal protein</keyword>
<protein>
    <recommendedName>
        <fullName evidence="1">Large ribosomal subunit protein uL30</fullName>
    </recommendedName>
    <alternativeName>
        <fullName evidence="2">50S ribosomal protein L30</fullName>
    </alternativeName>
</protein>